<accession>Q97X94</accession>
<reference key="1">
    <citation type="journal article" date="2001" name="Proc. Natl. Acad. Sci. U.S.A.">
        <title>The complete genome of the crenarchaeon Sulfolobus solfataricus P2.</title>
        <authorList>
            <person name="She Q."/>
            <person name="Singh R.K."/>
            <person name="Confalonieri F."/>
            <person name="Zivanovic Y."/>
            <person name="Allard G."/>
            <person name="Awayez M.J."/>
            <person name="Chan-Weiher C.C.-Y."/>
            <person name="Clausen I.G."/>
            <person name="Curtis B.A."/>
            <person name="De Moors A."/>
            <person name="Erauso G."/>
            <person name="Fletcher C."/>
            <person name="Gordon P.M.K."/>
            <person name="Heikamp-de Jong I."/>
            <person name="Jeffries A.C."/>
            <person name="Kozera C.J."/>
            <person name="Medina N."/>
            <person name="Peng X."/>
            <person name="Thi-Ngoc H.P."/>
            <person name="Redder P."/>
            <person name="Schenk M.E."/>
            <person name="Theriault C."/>
            <person name="Tolstrup N."/>
            <person name="Charlebois R.L."/>
            <person name="Doolittle W.F."/>
            <person name="Duguet M."/>
            <person name="Gaasterland T."/>
            <person name="Garrett R.A."/>
            <person name="Ragan M.A."/>
            <person name="Sensen C.W."/>
            <person name="Van der Oost J."/>
        </authorList>
    </citation>
    <scope>NUCLEOTIDE SEQUENCE [LARGE SCALE GENOMIC DNA]</scope>
    <source>
        <strain>ATCC 35092 / DSM 1617 / JCM 11322 / P2</strain>
    </source>
</reference>
<gene>
    <name evidence="1" type="primary">uppP</name>
    <name type="synonym">bacA</name>
    <name type="synonym">upk</name>
    <name type="ordered locus">SSO1860</name>
</gene>
<keyword id="KW-1003">Cell membrane</keyword>
<keyword id="KW-0378">Hydrolase</keyword>
<keyword id="KW-0472">Membrane</keyword>
<keyword id="KW-1185">Reference proteome</keyword>
<keyword id="KW-0812">Transmembrane</keyword>
<keyword id="KW-1133">Transmembrane helix</keyword>
<evidence type="ECO:0000255" key="1">
    <source>
        <dbReference type="HAMAP-Rule" id="MF_01006"/>
    </source>
</evidence>
<dbReference type="EC" id="3.6.1.27" evidence="1"/>
<dbReference type="EMBL" id="AE006641">
    <property type="protein sequence ID" value="AAK42048.1"/>
    <property type="molecule type" value="Genomic_DNA"/>
</dbReference>
<dbReference type="PIR" id="A99349">
    <property type="entry name" value="A99349"/>
</dbReference>
<dbReference type="RefSeq" id="WP_009988521.1">
    <property type="nucleotide sequence ID" value="NC_002754.1"/>
</dbReference>
<dbReference type="SMR" id="Q97X94"/>
<dbReference type="STRING" id="273057.SSO1860"/>
<dbReference type="PaxDb" id="273057-SSO1860"/>
<dbReference type="EnsemblBacteria" id="AAK42048">
    <property type="protein sequence ID" value="AAK42048"/>
    <property type="gene ID" value="SSO1860"/>
</dbReference>
<dbReference type="KEGG" id="sso:SSO1860"/>
<dbReference type="PATRIC" id="fig|273057.12.peg.1910"/>
<dbReference type="eggNOG" id="arCOG04761">
    <property type="taxonomic scope" value="Archaea"/>
</dbReference>
<dbReference type="HOGENOM" id="CLU_060296_1_2_2"/>
<dbReference type="InParanoid" id="Q97X94"/>
<dbReference type="PhylomeDB" id="Q97X94"/>
<dbReference type="Proteomes" id="UP000001974">
    <property type="component" value="Chromosome"/>
</dbReference>
<dbReference type="GO" id="GO:0005886">
    <property type="term" value="C:plasma membrane"/>
    <property type="evidence" value="ECO:0000318"/>
    <property type="project" value="GO_Central"/>
</dbReference>
<dbReference type="GO" id="GO:0050380">
    <property type="term" value="F:undecaprenyl-diphosphatase activity"/>
    <property type="evidence" value="ECO:0000318"/>
    <property type="project" value="GO_Central"/>
</dbReference>
<dbReference type="GO" id="GO:0000270">
    <property type="term" value="P:peptidoglycan metabolic process"/>
    <property type="evidence" value="ECO:0000318"/>
    <property type="project" value="GO_Central"/>
</dbReference>
<dbReference type="HAMAP" id="MF_01006">
    <property type="entry name" value="Undec_diphosphatase"/>
    <property type="match status" value="1"/>
</dbReference>
<dbReference type="InterPro" id="IPR003824">
    <property type="entry name" value="UppP"/>
</dbReference>
<dbReference type="NCBIfam" id="NF001398">
    <property type="entry name" value="PRK00281.3-5"/>
    <property type="match status" value="1"/>
</dbReference>
<dbReference type="PANTHER" id="PTHR30622">
    <property type="entry name" value="UNDECAPRENYL-DIPHOSPHATASE"/>
    <property type="match status" value="1"/>
</dbReference>
<dbReference type="PANTHER" id="PTHR30622:SF2">
    <property type="entry name" value="UNDECAPRENYL-DIPHOSPHATASE"/>
    <property type="match status" value="1"/>
</dbReference>
<dbReference type="Pfam" id="PF02673">
    <property type="entry name" value="BacA"/>
    <property type="match status" value="1"/>
</dbReference>
<protein>
    <recommendedName>
        <fullName evidence="1">Undecaprenyl-diphosphatase</fullName>
        <ecNumber evidence="1">3.6.1.27</ecNumber>
    </recommendedName>
    <alternativeName>
        <fullName evidence="1">Undecaprenyl pyrophosphate phosphatase</fullName>
    </alternativeName>
</protein>
<proteinExistence type="inferred from homology"/>
<comment type="function">
    <text evidence="1">Catalyzes the dephosphorylation of undecaprenyl diphosphate (UPP).</text>
</comment>
<comment type="catalytic activity">
    <reaction evidence="1">
        <text>di-trans,octa-cis-undecaprenyl diphosphate + H2O = di-trans,octa-cis-undecaprenyl phosphate + phosphate + H(+)</text>
        <dbReference type="Rhea" id="RHEA:28094"/>
        <dbReference type="ChEBI" id="CHEBI:15377"/>
        <dbReference type="ChEBI" id="CHEBI:15378"/>
        <dbReference type="ChEBI" id="CHEBI:43474"/>
        <dbReference type="ChEBI" id="CHEBI:58405"/>
        <dbReference type="ChEBI" id="CHEBI:60392"/>
        <dbReference type="EC" id="3.6.1.27"/>
    </reaction>
</comment>
<comment type="subcellular location">
    <subcellularLocation>
        <location evidence="1">Cell membrane</location>
        <topology evidence="1">Multi-pass membrane protein</topology>
    </subcellularLocation>
</comment>
<comment type="similarity">
    <text evidence="1">Belongs to the UppP family.</text>
</comment>
<organism>
    <name type="scientific">Saccharolobus solfataricus (strain ATCC 35092 / DSM 1617 / JCM 11322 / P2)</name>
    <name type="common">Sulfolobus solfataricus</name>
    <dbReference type="NCBI Taxonomy" id="273057"/>
    <lineage>
        <taxon>Archaea</taxon>
        <taxon>Thermoproteota</taxon>
        <taxon>Thermoprotei</taxon>
        <taxon>Sulfolobales</taxon>
        <taxon>Sulfolobaceae</taxon>
        <taxon>Saccharolobus</taxon>
    </lineage>
</organism>
<sequence>MNYILIGVILGIVQGISEWIPISSKTQVLIVSSTLLGLSFNVAYSFGLFMEIGTIAAAIFYFRSEISGLLKALVRMSSRREDYLLLKFLVIVTIITGLVGVPLYLFVISLPILGLPMTVLGVVLLIDGIVIYLSRKNYFPRKGLHDLKLRDIIIVGIAQGLAALPGVSRSGMTTSALILLGVKPEEAFKLSFISLIPAALGAISVTVLFSKHEVSQAVHSVSLSGLLISIVVATFVSIFFINALLRFARTNKVVLLVIILGIMAIISGILSDIAKGFY</sequence>
<name>UPPP_SACS2</name>
<feature type="chain" id="PRO_0000151254" description="Undecaprenyl-diphosphatase">
    <location>
        <begin position="1"/>
        <end position="278"/>
    </location>
</feature>
<feature type="transmembrane region" description="Helical" evidence="1">
    <location>
        <begin position="3"/>
        <end position="23"/>
    </location>
</feature>
<feature type="transmembrane region" description="Helical" evidence="1">
    <location>
        <begin position="42"/>
        <end position="62"/>
    </location>
</feature>
<feature type="transmembrane region" description="Helical" evidence="1">
    <location>
        <begin position="88"/>
        <end position="108"/>
    </location>
</feature>
<feature type="transmembrane region" description="Helical" evidence="1">
    <location>
        <begin position="112"/>
        <end position="132"/>
    </location>
</feature>
<feature type="transmembrane region" description="Helical" evidence="1">
    <location>
        <begin position="152"/>
        <end position="172"/>
    </location>
</feature>
<feature type="transmembrane region" description="Helical" evidence="1">
    <location>
        <begin position="190"/>
        <end position="210"/>
    </location>
</feature>
<feature type="transmembrane region" description="Helical" evidence="1">
    <location>
        <begin position="225"/>
        <end position="245"/>
    </location>
</feature>
<feature type="transmembrane region" description="Helical" evidence="1">
    <location>
        <begin position="253"/>
        <end position="273"/>
    </location>
</feature>